<comment type="function">
    <text evidence="2">Possesses low quercetin 7-O-glucosyltransferase activity in vitro.</text>
</comment>
<comment type="similarity">
    <text evidence="3">Belongs to the UDP-glycosyltransferase family.</text>
</comment>
<name>U84B1_ARATH</name>
<dbReference type="EC" id="2.4.1.-"/>
<dbReference type="EMBL" id="AC002391">
    <property type="protein sequence ID" value="AAB87119.1"/>
    <property type="molecule type" value="Genomic_DNA"/>
</dbReference>
<dbReference type="EMBL" id="CP002685">
    <property type="protein sequence ID" value="AEC07435.1"/>
    <property type="molecule type" value="Genomic_DNA"/>
</dbReference>
<dbReference type="EMBL" id="AK118431">
    <property type="protein sequence ID" value="BAC43040.1"/>
    <property type="molecule type" value="mRNA"/>
</dbReference>
<dbReference type="EMBL" id="BT005368">
    <property type="protein sequence ID" value="AAO63432.1"/>
    <property type="molecule type" value="mRNA"/>
</dbReference>
<dbReference type="PIR" id="T00506">
    <property type="entry name" value="T00506"/>
</dbReference>
<dbReference type="RefSeq" id="NP_179907.1">
    <property type="nucleotide sequence ID" value="NM_127890.3"/>
</dbReference>
<dbReference type="SMR" id="O22182"/>
<dbReference type="FunCoup" id="O22182">
    <property type="interactions" value="173"/>
</dbReference>
<dbReference type="STRING" id="3702.O22182"/>
<dbReference type="CAZy" id="GT1">
    <property type="family name" value="Glycosyltransferase Family 1"/>
</dbReference>
<dbReference type="PaxDb" id="3702-AT2G23260.1"/>
<dbReference type="ProteomicsDB" id="242811"/>
<dbReference type="EnsemblPlants" id="AT2G23260.1">
    <property type="protein sequence ID" value="AT2G23260.1"/>
    <property type="gene ID" value="AT2G23260"/>
</dbReference>
<dbReference type="GeneID" id="816858"/>
<dbReference type="Gramene" id="AT2G23260.1">
    <property type="protein sequence ID" value="AT2G23260.1"/>
    <property type="gene ID" value="AT2G23260"/>
</dbReference>
<dbReference type="KEGG" id="ath:AT2G23260"/>
<dbReference type="Araport" id="AT2G23260"/>
<dbReference type="TAIR" id="AT2G23260">
    <property type="gene designation" value="UGT84B1"/>
</dbReference>
<dbReference type="eggNOG" id="KOG1192">
    <property type="taxonomic scope" value="Eukaryota"/>
</dbReference>
<dbReference type="HOGENOM" id="CLU_001724_0_1_1"/>
<dbReference type="InParanoid" id="O22182"/>
<dbReference type="OMA" id="WIPEDSC"/>
<dbReference type="PhylomeDB" id="O22182"/>
<dbReference type="BioCyc" id="ARA:AT2G23260-MONOMER"/>
<dbReference type="BioCyc" id="MetaCyc:AT2G23260-MONOMER"/>
<dbReference type="SABIO-RK" id="O22182"/>
<dbReference type="PRO" id="PR:O22182"/>
<dbReference type="Proteomes" id="UP000006548">
    <property type="component" value="Chromosome 2"/>
</dbReference>
<dbReference type="ExpressionAtlas" id="O22182">
    <property type="expression patterns" value="baseline and differential"/>
</dbReference>
<dbReference type="GO" id="GO:0047215">
    <property type="term" value="F:indole-3-acetate beta-glucosyltransferase activity"/>
    <property type="evidence" value="ECO:0000314"/>
    <property type="project" value="TAIR"/>
</dbReference>
<dbReference type="GO" id="GO:0080044">
    <property type="term" value="F:quercetin 7-O-glucosyltransferase activity"/>
    <property type="evidence" value="ECO:0000314"/>
    <property type="project" value="TAIR"/>
</dbReference>
<dbReference type="GO" id="GO:0035251">
    <property type="term" value="F:UDP-glucosyltransferase activity"/>
    <property type="evidence" value="ECO:0000314"/>
    <property type="project" value="TAIR"/>
</dbReference>
<dbReference type="GO" id="GO:0090354">
    <property type="term" value="P:regulation of auxin metabolic process"/>
    <property type="evidence" value="ECO:0000315"/>
    <property type="project" value="TAIR"/>
</dbReference>
<dbReference type="CDD" id="cd03784">
    <property type="entry name" value="GT1_Gtf-like"/>
    <property type="match status" value="1"/>
</dbReference>
<dbReference type="FunFam" id="3.40.50.2000:FF:000078">
    <property type="entry name" value="Glycosyltransferase"/>
    <property type="match status" value="1"/>
</dbReference>
<dbReference type="Gene3D" id="3.40.50.2000">
    <property type="entry name" value="Glycogen Phosphorylase B"/>
    <property type="match status" value="2"/>
</dbReference>
<dbReference type="InterPro" id="IPR002213">
    <property type="entry name" value="UDP_glucos_trans"/>
</dbReference>
<dbReference type="InterPro" id="IPR035595">
    <property type="entry name" value="UDP_glycos_trans_CS"/>
</dbReference>
<dbReference type="PANTHER" id="PTHR11926">
    <property type="entry name" value="GLUCOSYL/GLUCURONOSYL TRANSFERASES"/>
    <property type="match status" value="1"/>
</dbReference>
<dbReference type="PANTHER" id="PTHR11926:SF1264">
    <property type="entry name" value="GLYCOSYLTRANSFERASE-RELATED"/>
    <property type="match status" value="1"/>
</dbReference>
<dbReference type="Pfam" id="PF00201">
    <property type="entry name" value="UDPGT"/>
    <property type="match status" value="1"/>
</dbReference>
<dbReference type="SUPFAM" id="SSF53756">
    <property type="entry name" value="UDP-Glycosyltransferase/glycogen phosphorylase"/>
    <property type="match status" value="1"/>
</dbReference>
<dbReference type="PROSITE" id="PS00375">
    <property type="entry name" value="UDPGT"/>
    <property type="match status" value="1"/>
</dbReference>
<gene>
    <name type="primary">UGT84B1</name>
    <name type="ordered locus">At2g23260</name>
    <name type="ORF">T20D16.11</name>
</gene>
<proteinExistence type="evidence at transcript level"/>
<keyword id="KW-0328">Glycosyltransferase</keyword>
<keyword id="KW-1185">Reference proteome</keyword>
<keyword id="KW-0808">Transferase</keyword>
<feature type="chain" id="PRO_0000409124" description="UDP-glycosyltransferase 84B1">
    <location>
        <begin position="1"/>
        <end position="456"/>
    </location>
</feature>
<feature type="binding site" evidence="1">
    <location>
        <position position="278"/>
    </location>
    <ligand>
        <name>UDP-alpha-D-glucose</name>
        <dbReference type="ChEBI" id="CHEBI:58885"/>
    </ligand>
</feature>
<feature type="binding site" evidence="1">
    <location>
        <begin position="332"/>
        <end position="334"/>
    </location>
    <ligand>
        <name>UDP-alpha-D-glucose</name>
        <dbReference type="ChEBI" id="CHEBI:58885"/>
    </ligand>
</feature>
<feature type="binding site" evidence="1">
    <location>
        <begin position="349"/>
        <end position="357"/>
    </location>
    <ligand>
        <name>UDP-alpha-D-glucose</name>
        <dbReference type="ChEBI" id="CHEBI:58885"/>
    </ligand>
</feature>
<feature type="binding site" evidence="1">
    <location>
        <begin position="371"/>
        <end position="374"/>
    </location>
    <ligand>
        <name>UDP-alpha-D-glucose</name>
        <dbReference type="ChEBI" id="CHEBI:58885"/>
    </ligand>
</feature>
<protein>
    <recommendedName>
        <fullName>UDP-glycosyltransferase 84B1</fullName>
        <ecNumber>2.4.1.-</ecNumber>
    </recommendedName>
</protein>
<reference key="1">
    <citation type="journal article" date="1999" name="Nature">
        <title>Sequence and analysis of chromosome 2 of the plant Arabidopsis thaliana.</title>
        <authorList>
            <person name="Lin X."/>
            <person name="Kaul S."/>
            <person name="Rounsley S.D."/>
            <person name="Shea T.P."/>
            <person name="Benito M.-I."/>
            <person name="Town C.D."/>
            <person name="Fujii C.Y."/>
            <person name="Mason T.M."/>
            <person name="Bowman C.L."/>
            <person name="Barnstead M.E."/>
            <person name="Feldblyum T.V."/>
            <person name="Buell C.R."/>
            <person name="Ketchum K.A."/>
            <person name="Lee J.J."/>
            <person name="Ronning C.M."/>
            <person name="Koo H.L."/>
            <person name="Moffat K.S."/>
            <person name="Cronin L.A."/>
            <person name="Shen M."/>
            <person name="Pai G."/>
            <person name="Van Aken S."/>
            <person name="Umayam L."/>
            <person name="Tallon L.J."/>
            <person name="Gill J.E."/>
            <person name="Adams M.D."/>
            <person name="Carrera A.J."/>
            <person name="Creasy T.H."/>
            <person name="Goodman H.M."/>
            <person name="Somerville C.R."/>
            <person name="Copenhaver G.P."/>
            <person name="Preuss D."/>
            <person name="Nierman W.C."/>
            <person name="White O."/>
            <person name="Eisen J.A."/>
            <person name="Salzberg S.L."/>
            <person name="Fraser C.M."/>
            <person name="Venter J.C."/>
        </authorList>
    </citation>
    <scope>NUCLEOTIDE SEQUENCE [LARGE SCALE GENOMIC DNA]</scope>
    <source>
        <strain>cv. Columbia</strain>
    </source>
</reference>
<reference key="2">
    <citation type="journal article" date="2017" name="Plant J.">
        <title>Araport11: a complete reannotation of the Arabidopsis thaliana reference genome.</title>
        <authorList>
            <person name="Cheng C.Y."/>
            <person name="Krishnakumar V."/>
            <person name="Chan A.P."/>
            <person name="Thibaud-Nissen F."/>
            <person name="Schobel S."/>
            <person name="Town C.D."/>
        </authorList>
    </citation>
    <scope>GENOME REANNOTATION</scope>
    <source>
        <strain>cv. Columbia</strain>
    </source>
</reference>
<reference key="3">
    <citation type="journal article" date="2002" name="Science">
        <title>Functional annotation of a full-length Arabidopsis cDNA collection.</title>
        <authorList>
            <person name="Seki M."/>
            <person name="Narusaka M."/>
            <person name="Kamiya A."/>
            <person name="Ishida J."/>
            <person name="Satou M."/>
            <person name="Sakurai T."/>
            <person name="Nakajima M."/>
            <person name="Enju A."/>
            <person name="Akiyama K."/>
            <person name="Oono Y."/>
            <person name="Muramatsu M."/>
            <person name="Hayashizaki Y."/>
            <person name="Kawai J."/>
            <person name="Carninci P."/>
            <person name="Itoh M."/>
            <person name="Ishii Y."/>
            <person name="Arakawa T."/>
            <person name="Shibata K."/>
            <person name="Shinagawa A."/>
            <person name="Shinozaki K."/>
        </authorList>
    </citation>
    <scope>NUCLEOTIDE SEQUENCE [LARGE SCALE MRNA]</scope>
    <source>
        <strain>cv. Columbia</strain>
    </source>
</reference>
<reference key="4">
    <citation type="journal article" date="2003" name="Science">
        <title>Empirical analysis of transcriptional activity in the Arabidopsis genome.</title>
        <authorList>
            <person name="Yamada K."/>
            <person name="Lim J."/>
            <person name="Dale J.M."/>
            <person name="Chen H."/>
            <person name="Shinn P."/>
            <person name="Palm C.J."/>
            <person name="Southwick A.M."/>
            <person name="Wu H.C."/>
            <person name="Kim C.J."/>
            <person name="Nguyen M."/>
            <person name="Pham P.K."/>
            <person name="Cheuk R.F."/>
            <person name="Karlin-Newmann G."/>
            <person name="Liu S.X."/>
            <person name="Lam B."/>
            <person name="Sakano H."/>
            <person name="Wu T."/>
            <person name="Yu G."/>
            <person name="Miranda M."/>
            <person name="Quach H.L."/>
            <person name="Tripp M."/>
            <person name="Chang C.H."/>
            <person name="Lee J.M."/>
            <person name="Toriumi M.J."/>
            <person name="Chan M.M."/>
            <person name="Tang C.C."/>
            <person name="Onodera C.S."/>
            <person name="Deng J.M."/>
            <person name="Akiyama K."/>
            <person name="Ansari Y."/>
            <person name="Arakawa T."/>
            <person name="Banh J."/>
            <person name="Banno F."/>
            <person name="Bowser L."/>
            <person name="Brooks S.Y."/>
            <person name="Carninci P."/>
            <person name="Chao Q."/>
            <person name="Choy N."/>
            <person name="Enju A."/>
            <person name="Goldsmith A.D."/>
            <person name="Gurjal M."/>
            <person name="Hansen N.F."/>
            <person name="Hayashizaki Y."/>
            <person name="Johnson-Hopson C."/>
            <person name="Hsuan V.W."/>
            <person name="Iida K."/>
            <person name="Karnes M."/>
            <person name="Khan S."/>
            <person name="Koesema E."/>
            <person name="Ishida J."/>
            <person name="Jiang P.X."/>
            <person name="Jones T."/>
            <person name="Kawai J."/>
            <person name="Kamiya A."/>
            <person name="Meyers C."/>
            <person name="Nakajima M."/>
            <person name="Narusaka M."/>
            <person name="Seki M."/>
            <person name="Sakurai T."/>
            <person name="Satou M."/>
            <person name="Tamse R."/>
            <person name="Vaysberg M."/>
            <person name="Wallender E.K."/>
            <person name="Wong C."/>
            <person name="Yamamura Y."/>
            <person name="Yuan S."/>
            <person name="Shinozaki K."/>
            <person name="Davis R.W."/>
            <person name="Theologis A."/>
            <person name="Ecker J.R."/>
        </authorList>
    </citation>
    <scope>NUCLEOTIDE SEQUENCE [LARGE SCALE MRNA]</scope>
    <source>
        <strain>cv. Columbia</strain>
    </source>
</reference>
<reference key="5">
    <citation type="journal article" date="2001" name="J. Biol. Chem.">
        <title>Phylogenetic analysis of the UDP-glycosyltransferase multigene family of Arabidopsis thaliana.</title>
        <authorList>
            <person name="Li Y."/>
            <person name="Baldauf S."/>
            <person name="Lim E.K."/>
            <person name="Bowles D.J."/>
        </authorList>
    </citation>
    <scope>GENE FAMILY</scope>
</reference>
<reference key="6">
    <citation type="journal article" date="2004" name="Biotechnol. Bioeng.">
        <title>Arabidopsis glycosyltransferases as biocatalysts in fermentation for regioselective synthesis of diverse quercetin glucosides.</title>
        <authorList>
            <person name="Lim E.K."/>
            <person name="Ashford D.A."/>
            <person name="Hou B."/>
            <person name="Jackson R.G."/>
            <person name="Bowles D.J."/>
        </authorList>
    </citation>
    <scope>FUNCTION</scope>
</reference>
<evidence type="ECO:0000250" key="1"/>
<evidence type="ECO:0000269" key="2">
    <source>
    </source>
</evidence>
<evidence type="ECO:0000305" key="3"/>
<organism>
    <name type="scientific">Arabidopsis thaliana</name>
    <name type="common">Mouse-ear cress</name>
    <dbReference type="NCBI Taxonomy" id="3702"/>
    <lineage>
        <taxon>Eukaryota</taxon>
        <taxon>Viridiplantae</taxon>
        <taxon>Streptophyta</taxon>
        <taxon>Embryophyta</taxon>
        <taxon>Tracheophyta</taxon>
        <taxon>Spermatophyta</taxon>
        <taxon>Magnoliopsida</taxon>
        <taxon>eudicotyledons</taxon>
        <taxon>Gunneridae</taxon>
        <taxon>Pentapetalae</taxon>
        <taxon>rosids</taxon>
        <taxon>malvids</taxon>
        <taxon>Brassicales</taxon>
        <taxon>Brassicaceae</taxon>
        <taxon>Camelineae</taxon>
        <taxon>Arabidopsis</taxon>
    </lineage>
</organism>
<sequence length="456" mass="50714">MGSSEGQETHVLMVTLPFQGHINPMLKLAKHLSLSSKNLHINLATIESARDLLSTVEKPRYPVDLVFFSDGLPKEDPKAPETLLKSLNKVGAMNLSKIIEEKRYSCIISSPFTPWVPAVAASHNISCAILWIQACGAYSVYYRYYMKTNSFPDLEDLNQTVELPALPLLEVRDLPSFMLPSGGAHFYNLMAEFADCLRYVKWVLVNSFYELESEIIESMADLKPVIPIGPLVSPFLLGDGEEETLDGKNLDFCKSDDCCMEWLDKQARSSVVYISFGSMLETLENQVETIAKALKNRGLPFLWVIRPKEKAQNVAVLQEMVKEGQGVVLEWSPQEKILSHEAISCFVTHCGWNSTMETVVAGVPVVAYPSWTDQPIDARLLVDVFGIGVRMRNDSVDGELKVEEVERCIEAVTEGPAAVDIRRRAAELKRVARLALAPGGSSTRNLDLFISDITIA</sequence>
<accession>O22182</accession>